<proteinExistence type="evidence at protein level"/>
<name>ESXB_STAAE</name>
<feature type="chain" id="PRO_0000167834" description="Type VII secretion system extracellular protein B">
    <location>
        <begin position="1"/>
        <end position="104"/>
    </location>
</feature>
<reference key="1">
    <citation type="journal article" date="2008" name="J. Bacteriol.">
        <title>Genome sequence of Staphylococcus aureus strain Newman and comparative analysis of staphylococcal genomes: polymorphism and evolution of two major pathogenicity islands.</title>
        <authorList>
            <person name="Baba T."/>
            <person name="Bae T."/>
            <person name="Schneewind O."/>
            <person name="Takeuchi F."/>
            <person name="Hiramatsu K."/>
        </authorList>
    </citation>
    <scope>NUCLEOTIDE SEQUENCE [LARGE SCALE GENOMIC DNA]</scope>
    <source>
        <strain>Newman</strain>
    </source>
</reference>
<reference key="2">
    <citation type="journal article" date="2005" name="Proc. Natl. Acad. Sci. U.S.A.">
        <title>EsxA and EsxB are secreted by an ESAT-6-like system that is required for the pathogenesis of Staphylococcus aureus infections.</title>
        <authorList>
            <person name="Burts M.L."/>
            <person name="Williams W.A."/>
            <person name="DeBord K."/>
            <person name="Missiakas D.M."/>
        </authorList>
    </citation>
    <scope>FUNCTION IN VIRULENCE</scope>
    <scope>SUBCELLULAR LOCATION</scope>
    <scope>DISRUPTION PHENOTYPE</scope>
    <source>
        <strain>Newman</strain>
    </source>
</reference>
<keyword id="KW-0964">Secreted</keyword>
<keyword id="KW-0843">Virulence</keyword>
<comment type="function">
    <text evidence="1 3">Virulence factor that is important for the establishment of infection in the host. EsxB is required for EsxA synthesis as well as secretion (PubMed:15657139). Mediates together with EsxA the release of S.aureus from the host cell. Also inhibits host cytokine production and thus modulates dendritic cell-mediated immunity (By similarity).</text>
</comment>
<comment type="subunit">
    <text evidence="2">Homodimer. When mixed with EsxA does not form heterodimers.</text>
</comment>
<comment type="subcellular location">
    <subcellularLocation>
        <location evidence="3">Secreted</location>
    </subcellularLocation>
    <text evidence="5">Secreted via the ESAT-6 secretion system (Ess) / type VII secretion system (T7SS).</text>
</comment>
<comment type="disruption phenotype">
    <text evidence="3">Mutant shows a significant reduction in the ability to establish kidney or liver abscesses in infected mice.</text>
</comment>
<comment type="similarity">
    <text evidence="5">Belongs to the WXG100 family.</text>
</comment>
<organism>
    <name type="scientific">Staphylococcus aureus (strain Newman)</name>
    <dbReference type="NCBI Taxonomy" id="426430"/>
    <lineage>
        <taxon>Bacteria</taxon>
        <taxon>Bacillati</taxon>
        <taxon>Bacillota</taxon>
        <taxon>Bacilli</taxon>
        <taxon>Bacillales</taxon>
        <taxon>Staphylococcaceae</taxon>
        <taxon>Staphylococcus</taxon>
    </lineage>
</organism>
<gene>
    <name evidence="4" type="primary">esxB</name>
    <name type="ordered locus">NWMN_0225</name>
</gene>
<sequence length="104" mass="11510">MGGYKGIKADGGKVDQAKQLAAKTAKDIEACQKQTQQLAEYIEGSDWEGQFANKVKDVLLIMAKFQEELVQPMADHQKAIDNLSQNLAKYDTLSIKQGLDRVNP</sequence>
<accession>P0C047</accession>
<accession>A6QDR5</accession>
<protein>
    <recommendedName>
        <fullName evidence="5">Type VII secretion system extracellular protein B</fullName>
        <shortName evidence="5">Ess extracellular protein B</shortName>
    </recommendedName>
</protein>
<evidence type="ECO:0000250" key="1">
    <source>
        <dbReference type="UniProtKB" id="A0A0H2XIE9"/>
    </source>
</evidence>
<evidence type="ECO:0000250" key="2">
    <source>
        <dbReference type="UniProtKB" id="Q2G182"/>
    </source>
</evidence>
<evidence type="ECO:0000269" key="3">
    <source>
    </source>
</evidence>
<evidence type="ECO:0000303" key="4">
    <source>
    </source>
</evidence>
<evidence type="ECO:0000305" key="5"/>
<dbReference type="EMBL" id="AP009351">
    <property type="protein sequence ID" value="BAF66497.1"/>
    <property type="molecule type" value="Genomic_DNA"/>
</dbReference>
<dbReference type="RefSeq" id="WP_000509668.1">
    <property type="nucleotide sequence ID" value="NZ_JBBIAE010000003.1"/>
</dbReference>
<dbReference type="SMR" id="P0C047"/>
<dbReference type="GeneID" id="66838592"/>
<dbReference type="KEGG" id="sae:NWMN_0225"/>
<dbReference type="HOGENOM" id="CLU_2248426_0_0_9"/>
<dbReference type="Proteomes" id="UP000006386">
    <property type="component" value="Chromosome"/>
</dbReference>
<dbReference type="GO" id="GO:0005576">
    <property type="term" value="C:extracellular region"/>
    <property type="evidence" value="ECO:0007669"/>
    <property type="project" value="UniProtKB-SubCell"/>
</dbReference>
<dbReference type="InterPro" id="IPR036689">
    <property type="entry name" value="ESAT-6-like_sf"/>
</dbReference>
<dbReference type="InterPro" id="IPR010310">
    <property type="entry name" value="T7SS_ESAT-6-like"/>
</dbReference>
<dbReference type="Pfam" id="PF06013">
    <property type="entry name" value="WXG100"/>
    <property type="match status" value="1"/>
</dbReference>
<dbReference type="SUPFAM" id="SSF140453">
    <property type="entry name" value="EsxAB dimer-like"/>
    <property type="match status" value="1"/>
</dbReference>